<protein>
    <recommendedName>
        <fullName evidence="1">UPF0344 protein lp_1373</fullName>
    </recommendedName>
</protein>
<comment type="subcellular location">
    <subcellularLocation>
        <location evidence="1">Cell membrane</location>
        <topology evidence="1">Multi-pass membrane protein</topology>
    </subcellularLocation>
</comment>
<comment type="similarity">
    <text evidence="1">Belongs to the UPF0344 family.</text>
</comment>
<feature type="chain" id="PRO_0000105888" description="UPF0344 protein lp_1373">
    <location>
        <begin position="1"/>
        <end position="119"/>
    </location>
</feature>
<feature type="transmembrane region" description="Helical" evidence="1">
    <location>
        <begin position="1"/>
        <end position="21"/>
    </location>
</feature>
<feature type="transmembrane region" description="Helical" evidence="1">
    <location>
        <begin position="32"/>
        <end position="52"/>
    </location>
</feature>
<feature type="transmembrane region" description="Helical" evidence="1">
    <location>
        <begin position="60"/>
        <end position="80"/>
    </location>
</feature>
<feature type="transmembrane region" description="Helical" evidence="1">
    <location>
        <begin position="92"/>
        <end position="112"/>
    </location>
</feature>
<keyword id="KW-1003">Cell membrane</keyword>
<keyword id="KW-0472">Membrane</keyword>
<keyword id="KW-1185">Reference proteome</keyword>
<keyword id="KW-0812">Transmembrane</keyword>
<keyword id="KW-1133">Transmembrane helix</keyword>
<name>Y1373_LACPL</name>
<sequence length="119" mass="13028">MYLLGHIIGWLWLMLTVAIGLSRHSVKSANRFLILSRIGYLLIIITGVALAIRTLSGNWWLTLLKVILGLGTIGLIEVAFARKQESHLNSGLVTLLVCGTLLTIICGIGLHWQLTGNLI</sequence>
<proteinExistence type="inferred from homology"/>
<dbReference type="EMBL" id="AL935263">
    <property type="protein sequence ID" value="CCC78722.1"/>
    <property type="molecule type" value="Genomic_DNA"/>
</dbReference>
<dbReference type="RefSeq" id="WP_003645248.1">
    <property type="nucleotide sequence ID" value="NC_004567.2"/>
</dbReference>
<dbReference type="RefSeq" id="YP_004889236.1">
    <property type="nucleotide sequence ID" value="NC_004567.2"/>
</dbReference>
<dbReference type="STRING" id="220668.lp_1373"/>
<dbReference type="EnsemblBacteria" id="CCC78722">
    <property type="protein sequence ID" value="CCC78722"/>
    <property type="gene ID" value="lp_1373"/>
</dbReference>
<dbReference type="KEGG" id="lpl:lp_1373"/>
<dbReference type="PATRIC" id="fig|220668.9.peg.1153"/>
<dbReference type="eggNOG" id="ENOG5030A1X">
    <property type="taxonomic scope" value="Bacteria"/>
</dbReference>
<dbReference type="HOGENOM" id="CLU_146641_0_1_9"/>
<dbReference type="OrthoDB" id="2313807at2"/>
<dbReference type="Proteomes" id="UP000000432">
    <property type="component" value="Chromosome"/>
</dbReference>
<dbReference type="GO" id="GO:0005886">
    <property type="term" value="C:plasma membrane"/>
    <property type="evidence" value="ECO:0007669"/>
    <property type="project" value="UniProtKB-SubCell"/>
</dbReference>
<dbReference type="HAMAP" id="MF_01536">
    <property type="entry name" value="UPF0344"/>
    <property type="match status" value="1"/>
</dbReference>
<dbReference type="InterPro" id="IPR010899">
    <property type="entry name" value="UPF0344"/>
</dbReference>
<dbReference type="NCBIfam" id="NF010199">
    <property type="entry name" value="PRK13673.1-6"/>
    <property type="match status" value="1"/>
</dbReference>
<dbReference type="Pfam" id="PF07457">
    <property type="entry name" value="DUF1516"/>
    <property type="match status" value="1"/>
</dbReference>
<evidence type="ECO:0000255" key="1">
    <source>
        <dbReference type="HAMAP-Rule" id="MF_01536"/>
    </source>
</evidence>
<accession>Q88X65</accession>
<accession>F9UND3</accession>
<reference key="1">
    <citation type="journal article" date="2003" name="Proc. Natl. Acad. Sci. U.S.A.">
        <title>Complete genome sequence of Lactobacillus plantarum WCFS1.</title>
        <authorList>
            <person name="Kleerebezem M."/>
            <person name="Boekhorst J."/>
            <person name="van Kranenburg R."/>
            <person name="Molenaar D."/>
            <person name="Kuipers O.P."/>
            <person name="Leer R."/>
            <person name="Tarchini R."/>
            <person name="Peters S.A."/>
            <person name="Sandbrink H.M."/>
            <person name="Fiers M.W.E.J."/>
            <person name="Stiekema W."/>
            <person name="Klein Lankhorst R.M."/>
            <person name="Bron P.A."/>
            <person name="Hoffer S.M."/>
            <person name="Nierop Groot M.N."/>
            <person name="Kerkhoven R."/>
            <person name="De Vries M."/>
            <person name="Ursing B."/>
            <person name="De Vos W.M."/>
            <person name="Siezen R.J."/>
        </authorList>
    </citation>
    <scope>NUCLEOTIDE SEQUENCE [LARGE SCALE GENOMIC DNA]</scope>
    <source>
        <strain>ATCC BAA-793 / NCIMB 8826 / WCFS1</strain>
    </source>
</reference>
<reference key="2">
    <citation type="journal article" date="2012" name="J. Bacteriol.">
        <title>Complete resequencing and reannotation of the Lactobacillus plantarum WCFS1 genome.</title>
        <authorList>
            <person name="Siezen R.J."/>
            <person name="Francke C."/>
            <person name="Renckens B."/>
            <person name="Boekhorst J."/>
            <person name="Wels M."/>
            <person name="Kleerebezem M."/>
            <person name="van Hijum S.A."/>
        </authorList>
    </citation>
    <scope>NUCLEOTIDE SEQUENCE [LARGE SCALE GENOMIC DNA]</scope>
    <scope>GENOME REANNOTATION</scope>
    <source>
        <strain>ATCC BAA-793 / NCIMB 8826 / WCFS1</strain>
    </source>
</reference>
<gene>
    <name type="ordered locus">lp_1373</name>
</gene>
<organism>
    <name type="scientific">Lactiplantibacillus plantarum (strain ATCC BAA-793 / NCIMB 8826 / WCFS1)</name>
    <name type="common">Lactobacillus plantarum</name>
    <dbReference type="NCBI Taxonomy" id="220668"/>
    <lineage>
        <taxon>Bacteria</taxon>
        <taxon>Bacillati</taxon>
        <taxon>Bacillota</taxon>
        <taxon>Bacilli</taxon>
        <taxon>Lactobacillales</taxon>
        <taxon>Lactobacillaceae</taxon>
        <taxon>Lactiplantibacillus</taxon>
    </lineage>
</organism>